<protein>
    <recommendedName>
        <fullName evidence="1">Putative septation protein SpoVG</fullName>
    </recommendedName>
</protein>
<accession>Q6MJH6</accession>
<gene>
    <name evidence="1" type="primary">spoVG</name>
    <name type="ordered locus">Bd2801</name>
</gene>
<name>SP5G_BDEBA</name>
<feature type="chain" id="PRO_0000157190" description="Putative septation protein SpoVG">
    <location>
        <begin position="1"/>
        <end position="108"/>
    </location>
</feature>
<reference key="1">
    <citation type="journal article" date="2004" name="Science">
        <title>A predator unmasked: life cycle of Bdellovibrio bacteriovorus from a genomic perspective.</title>
        <authorList>
            <person name="Rendulic S."/>
            <person name="Jagtap P."/>
            <person name="Rosinus A."/>
            <person name="Eppinger M."/>
            <person name="Baar C."/>
            <person name="Lanz C."/>
            <person name="Keller H."/>
            <person name="Lambert C."/>
            <person name="Evans K.J."/>
            <person name="Goesmann A."/>
            <person name="Meyer F."/>
            <person name="Sockett R.E."/>
            <person name="Schuster S.C."/>
        </authorList>
    </citation>
    <scope>NUCLEOTIDE SEQUENCE [LARGE SCALE GENOMIC DNA]</scope>
    <source>
        <strain>ATCC 15356 / DSM 50701 / NCIMB 9529 / HD100</strain>
    </source>
</reference>
<dbReference type="EMBL" id="BX842653">
    <property type="protein sequence ID" value="CAE80584.1"/>
    <property type="molecule type" value="Genomic_DNA"/>
</dbReference>
<dbReference type="RefSeq" id="WP_011165187.1">
    <property type="nucleotide sequence ID" value="NC_005363.1"/>
</dbReference>
<dbReference type="SMR" id="Q6MJH6"/>
<dbReference type="STRING" id="264462.Bd2801"/>
<dbReference type="GeneID" id="93013680"/>
<dbReference type="KEGG" id="bba:Bd2801"/>
<dbReference type="eggNOG" id="COG2088">
    <property type="taxonomic scope" value="Bacteria"/>
</dbReference>
<dbReference type="HOGENOM" id="CLU_103669_2_1_7"/>
<dbReference type="Proteomes" id="UP000008080">
    <property type="component" value="Chromosome"/>
</dbReference>
<dbReference type="GO" id="GO:0000917">
    <property type="term" value="P:division septum assembly"/>
    <property type="evidence" value="ECO:0007669"/>
    <property type="project" value="UniProtKB-KW"/>
</dbReference>
<dbReference type="GO" id="GO:0030435">
    <property type="term" value="P:sporulation resulting in formation of a cellular spore"/>
    <property type="evidence" value="ECO:0007669"/>
    <property type="project" value="InterPro"/>
</dbReference>
<dbReference type="Gene3D" id="3.30.1120.40">
    <property type="entry name" value="Stage V sporulation protein G"/>
    <property type="match status" value="1"/>
</dbReference>
<dbReference type="HAMAP" id="MF_00819">
    <property type="entry name" value="SpoVG"/>
    <property type="match status" value="1"/>
</dbReference>
<dbReference type="InterPro" id="IPR007170">
    <property type="entry name" value="SpoVG"/>
</dbReference>
<dbReference type="InterPro" id="IPR036751">
    <property type="entry name" value="SpoVG_sf"/>
</dbReference>
<dbReference type="NCBIfam" id="NF009749">
    <property type="entry name" value="PRK13259.1"/>
    <property type="match status" value="1"/>
</dbReference>
<dbReference type="PANTHER" id="PTHR38429">
    <property type="entry name" value="SEPTATION PROTEIN SPOVG-RELATED"/>
    <property type="match status" value="1"/>
</dbReference>
<dbReference type="PANTHER" id="PTHR38429:SF1">
    <property type="entry name" value="SEPTATION PROTEIN SPOVG-RELATED"/>
    <property type="match status" value="1"/>
</dbReference>
<dbReference type="Pfam" id="PF04026">
    <property type="entry name" value="SpoVG"/>
    <property type="match status" value="1"/>
</dbReference>
<dbReference type="SUPFAM" id="SSF160537">
    <property type="entry name" value="SpoVG-like"/>
    <property type="match status" value="1"/>
</dbReference>
<proteinExistence type="inferred from homology"/>
<comment type="function">
    <text evidence="1">Could be involved in septation.</text>
</comment>
<comment type="similarity">
    <text evidence="1">Belongs to the SpoVG family.</text>
</comment>
<keyword id="KW-0131">Cell cycle</keyword>
<keyword id="KW-0132">Cell division</keyword>
<keyword id="KW-1185">Reference proteome</keyword>
<keyword id="KW-0717">Septation</keyword>
<evidence type="ECO:0000255" key="1">
    <source>
        <dbReference type="HAMAP-Rule" id="MF_00819"/>
    </source>
</evidence>
<organism>
    <name type="scientific">Bdellovibrio bacteriovorus (strain ATCC 15356 / DSM 50701 / NCIMB 9529 / HD100)</name>
    <dbReference type="NCBI Taxonomy" id="264462"/>
    <lineage>
        <taxon>Bacteria</taxon>
        <taxon>Pseudomonadati</taxon>
        <taxon>Bdellovibrionota</taxon>
        <taxon>Bdellovibrionia</taxon>
        <taxon>Bdellovibrionales</taxon>
        <taxon>Pseudobdellovibrionaceae</taxon>
        <taxon>Bdellovibrio</taxon>
    </lineage>
</organism>
<sequence>MKVTEVKVFPVNEDRLKAYVSITLDNCFVVRDLKVIQGTSGLFVAMPSKKRKDGQFRDIAHPLNQETRAMIEDLIFEAYEKELKSMGETLVSLKRQKAPGSDYGNDDY</sequence>